<gene>
    <name type="primary">Ripk4</name>
    <name type="synonym">Ankrd3</name>
    <name type="synonym">Pkk</name>
</gene>
<proteinExistence type="evidence at protein level"/>
<reference key="1">
    <citation type="journal article" date="2001" name="J. Biol. Chem.">
        <title>Protein kinase C-associated kinase (PKK), a novel membrane-associated, ankyrin repeat-containing protein kinase.</title>
        <authorList>
            <person name="Chen L."/>
            <person name="Haider K."/>
            <person name="Ponda M."/>
            <person name="Cariappa A."/>
            <person name="Rowitch D."/>
            <person name="Pillai S."/>
        </authorList>
    </citation>
    <scope>NUCLEOTIDE SEQUENCE [MRNA]</scope>
    <scope>INTERACTION WITH PRKCB</scope>
    <scope>PHOSPHORYLATION</scope>
    <scope>SUBCELLULAR LOCATION</scope>
    <scope>TISSUE SPECIFICITY</scope>
    <scope>DEVELOPMENTAL STAGE</scope>
    <source>
        <strain>BALB/cJ</strain>
    </source>
</reference>
<reference key="2">
    <citation type="journal article" date="2005" name="Science">
        <title>The transcriptional landscape of the mammalian genome.</title>
        <authorList>
            <person name="Carninci P."/>
            <person name="Kasukawa T."/>
            <person name="Katayama S."/>
            <person name="Gough J."/>
            <person name="Frith M.C."/>
            <person name="Maeda N."/>
            <person name="Oyama R."/>
            <person name="Ravasi T."/>
            <person name="Lenhard B."/>
            <person name="Wells C."/>
            <person name="Kodzius R."/>
            <person name="Shimokawa K."/>
            <person name="Bajic V.B."/>
            <person name="Brenner S.E."/>
            <person name="Batalov S."/>
            <person name="Forrest A.R."/>
            <person name="Zavolan M."/>
            <person name="Davis M.J."/>
            <person name="Wilming L.G."/>
            <person name="Aidinis V."/>
            <person name="Allen J.E."/>
            <person name="Ambesi-Impiombato A."/>
            <person name="Apweiler R."/>
            <person name="Aturaliya R.N."/>
            <person name="Bailey T.L."/>
            <person name="Bansal M."/>
            <person name="Baxter L."/>
            <person name="Beisel K.W."/>
            <person name="Bersano T."/>
            <person name="Bono H."/>
            <person name="Chalk A.M."/>
            <person name="Chiu K.P."/>
            <person name="Choudhary V."/>
            <person name="Christoffels A."/>
            <person name="Clutterbuck D.R."/>
            <person name="Crowe M.L."/>
            <person name="Dalla E."/>
            <person name="Dalrymple B.P."/>
            <person name="de Bono B."/>
            <person name="Della Gatta G."/>
            <person name="di Bernardo D."/>
            <person name="Down T."/>
            <person name="Engstrom P."/>
            <person name="Fagiolini M."/>
            <person name="Faulkner G."/>
            <person name="Fletcher C.F."/>
            <person name="Fukushima T."/>
            <person name="Furuno M."/>
            <person name="Futaki S."/>
            <person name="Gariboldi M."/>
            <person name="Georgii-Hemming P."/>
            <person name="Gingeras T.R."/>
            <person name="Gojobori T."/>
            <person name="Green R.E."/>
            <person name="Gustincich S."/>
            <person name="Harbers M."/>
            <person name="Hayashi Y."/>
            <person name="Hensch T.K."/>
            <person name="Hirokawa N."/>
            <person name="Hill D."/>
            <person name="Huminiecki L."/>
            <person name="Iacono M."/>
            <person name="Ikeo K."/>
            <person name="Iwama A."/>
            <person name="Ishikawa T."/>
            <person name="Jakt M."/>
            <person name="Kanapin A."/>
            <person name="Katoh M."/>
            <person name="Kawasawa Y."/>
            <person name="Kelso J."/>
            <person name="Kitamura H."/>
            <person name="Kitano H."/>
            <person name="Kollias G."/>
            <person name="Krishnan S.P."/>
            <person name="Kruger A."/>
            <person name="Kummerfeld S.K."/>
            <person name="Kurochkin I.V."/>
            <person name="Lareau L.F."/>
            <person name="Lazarevic D."/>
            <person name="Lipovich L."/>
            <person name="Liu J."/>
            <person name="Liuni S."/>
            <person name="McWilliam S."/>
            <person name="Madan Babu M."/>
            <person name="Madera M."/>
            <person name="Marchionni L."/>
            <person name="Matsuda H."/>
            <person name="Matsuzawa S."/>
            <person name="Miki H."/>
            <person name="Mignone F."/>
            <person name="Miyake S."/>
            <person name="Morris K."/>
            <person name="Mottagui-Tabar S."/>
            <person name="Mulder N."/>
            <person name="Nakano N."/>
            <person name="Nakauchi H."/>
            <person name="Ng P."/>
            <person name="Nilsson R."/>
            <person name="Nishiguchi S."/>
            <person name="Nishikawa S."/>
            <person name="Nori F."/>
            <person name="Ohara O."/>
            <person name="Okazaki Y."/>
            <person name="Orlando V."/>
            <person name="Pang K.C."/>
            <person name="Pavan W.J."/>
            <person name="Pavesi G."/>
            <person name="Pesole G."/>
            <person name="Petrovsky N."/>
            <person name="Piazza S."/>
            <person name="Reed J."/>
            <person name="Reid J.F."/>
            <person name="Ring B.Z."/>
            <person name="Ringwald M."/>
            <person name="Rost B."/>
            <person name="Ruan Y."/>
            <person name="Salzberg S.L."/>
            <person name="Sandelin A."/>
            <person name="Schneider C."/>
            <person name="Schoenbach C."/>
            <person name="Sekiguchi K."/>
            <person name="Semple C.A."/>
            <person name="Seno S."/>
            <person name="Sessa L."/>
            <person name="Sheng Y."/>
            <person name="Shibata Y."/>
            <person name="Shimada H."/>
            <person name="Shimada K."/>
            <person name="Silva D."/>
            <person name="Sinclair B."/>
            <person name="Sperling S."/>
            <person name="Stupka E."/>
            <person name="Sugiura K."/>
            <person name="Sultana R."/>
            <person name="Takenaka Y."/>
            <person name="Taki K."/>
            <person name="Tammoja K."/>
            <person name="Tan S.L."/>
            <person name="Tang S."/>
            <person name="Taylor M.S."/>
            <person name="Tegner J."/>
            <person name="Teichmann S.A."/>
            <person name="Ueda H.R."/>
            <person name="van Nimwegen E."/>
            <person name="Verardo R."/>
            <person name="Wei C.L."/>
            <person name="Yagi K."/>
            <person name="Yamanishi H."/>
            <person name="Zabarovsky E."/>
            <person name="Zhu S."/>
            <person name="Zimmer A."/>
            <person name="Hide W."/>
            <person name="Bult C."/>
            <person name="Grimmond S.M."/>
            <person name="Teasdale R.D."/>
            <person name="Liu E.T."/>
            <person name="Brusic V."/>
            <person name="Quackenbush J."/>
            <person name="Wahlestedt C."/>
            <person name="Mattick J.S."/>
            <person name="Hume D.A."/>
            <person name="Kai C."/>
            <person name="Sasaki D."/>
            <person name="Tomaru Y."/>
            <person name="Fukuda S."/>
            <person name="Kanamori-Katayama M."/>
            <person name="Suzuki M."/>
            <person name="Aoki J."/>
            <person name="Arakawa T."/>
            <person name="Iida J."/>
            <person name="Imamura K."/>
            <person name="Itoh M."/>
            <person name="Kato T."/>
            <person name="Kawaji H."/>
            <person name="Kawagashira N."/>
            <person name="Kawashima T."/>
            <person name="Kojima M."/>
            <person name="Kondo S."/>
            <person name="Konno H."/>
            <person name="Nakano K."/>
            <person name="Ninomiya N."/>
            <person name="Nishio T."/>
            <person name="Okada M."/>
            <person name="Plessy C."/>
            <person name="Shibata K."/>
            <person name="Shiraki T."/>
            <person name="Suzuki S."/>
            <person name="Tagami M."/>
            <person name="Waki K."/>
            <person name="Watahiki A."/>
            <person name="Okamura-Oho Y."/>
            <person name="Suzuki H."/>
            <person name="Kawai J."/>
            <person name="Hayashizaki Y."/>
        </authorList>
    </citation>
    <scope>NUCLEOTIDE SEQUENCE [LARGE SCALE MRNA]</scope>
    <source>
        <tissue>Mammary gland</tissue>
    </source>
</reference>
<reference key="3">
    <citation type="journal article" date="2004" name="Genome Res.">
        <title>The status, quality, and expansion of the NIH full-length cDNA project: the Mammalian Gene Collection (MGC).</title>
        <authorList>
            <consortium name="The MGC Project Team"/>
        </authorList>
    </citation>
    <scope>NUCLEOTIDE SEQUENCE [LARGE SCALE MRNA]</scope>
    <source>
        <strain>NMRI</strain>
        <tissue>Mammary tumor</tissue>
    </source>
</reference>
<reference key="4">
    <citation type="journal article" date="2002" name="EMBO Rep.">
        <title>RIP4 (DIK/PKK), a novel member of the RIP kinase family, activates NF-kappa B and is processed during apoptosis.</title>
        <authorList>
            <person name="Meylan E."/>
            <person name="Martinon F."/>
            <person name="Thome M."/>
            <person name="Gschwendt M."/>
            <person name="Tschopp J."/>
        </authorList>
    </citation>
    <scope>PROTEOLYTIC CLEAVAGE AT ASP-342 AND ASP-380</scope>
    <scope>INTERACTION WITH TRAF1; TRAF2; TRAF3 AND TRAF5</scope>
    <scope>FUNCTION</scope>
</reference>
<reference key="5">
    <citation type="journal article" date="2003" name="J. Biol. Chem.">
        <title>Protein kinase C-associated kinase can activate NFkappaB in both a kinase-dependent and a kinase-independent manner.</title>
        <authorList>
            <person name="Moran S.T."/>
            <person name="Haider K."/>
            <person name="Ow Y."/>
            <person name="Milton P."/>
            <person name="Chen L."/>
            <person name="Pillai S."/>
        </authorList>
    </citation>
    <scope>PHOSPHORYLATION</scope>
</reference>
<reference key="6">
    <citation type="journal article" date="2012" name="Am. J. Hum. Genet.">
        <title>Exome sequence identifies RIPK4 as the Bartsocas-Papas syndrome locus.</title>
        <authorList>
            <person name="Mitchell K."/>
            <person name="O'Sullivan J."/>
            <person name="Missero C."/>
            <person name="Blair E."/>
            <person name="Richardson R."/>
            <person name="Anderson B."/>
            <person name="Antonini D."/>
            <person name="Murray J.C."/>
            <person name="Shanske A.L."/>
            <person name="Schutte B.C."/>
            <person name="Romano R.A."/>
            <person name="Sinha S."/>
            <person name="Bhaskar S.S."/>
            <person name="Black G.C."/>
            <person name="Dixon J."/>
            <person name="Dixon M.J."/>
        </authorList>
    </citation>
    <scope>FUNCTION</scope>
    <scope>SUBCELLULAR LOCATION</scope>
</reference>
<reference key="7">
    <citation type="journal article" date="2017" name="EMBO J.">
        <title>Phosphorylation of Pkp1 by RIPK4 regulates epidermal differentiation and skin tumorigenesis.</title>
        <authorList>
            <person name="Lee P."/>
            <person name="Jiang S."/>
            <person name="Li Y."/>
            <person name="Yue J."/>
            <person name="Gou X."/>
            <person name="Chen S.Y."/>
            <person name="Zhao Y."/>
            <person name="Schober M."/>
            <person name="Tan M."/>
            <person name="Wu X."/>
        </authorList>
    </citation>
    <scope>FUNCTION</scope>
    <scope>CATALYTIC ACTIVITY</scope>
    <scope>TISSUE SPECIFICITY</scope>
    <scope>DISRUPTION PHENOTYPE</scope>
</reference>
<dbReference type="EC" id="2.7.11.1" evidence="10"/>
<dbReference type="EMBL" id="AF302127">
    <property type="protein sequence ID" value="AAG30871.2"/>
    <property type="molecule type" value="mRNA"/>
</dbReference>
<dbReference type="EMBL" id="AK145203">
    <property type="protein sequence ID" value="BAE26294.1"/>
    <property type="molecule type" value="mRNA"/>
</dbReference>
<dbReference type="EMBL" id="BC057871">
    <property type="protein sequence ID" value="AAH57871.1"/>
    <property type="molecule type" value="mRNA"/>
</dbReference>
<dbReference type="CCDS" id="CCDS28360.1"/>
<dbReference type="RefSeq" id="NP_076152.2">
    <property type="nucleotide sequence ID" value="NM_023663.6"/>
</dbReference>
<dbReference type="PDB" id="5WNI">
    <property type="method" value="X-ray"/>
    <property type="resolution" value="2.65 A"/>
    <property type="chains" value="A=1-342"/>
</dbReference>
<dbReference type="PDB" id="5WNJ">
    <property type="method" value="X-ray"/>
    <property type="resolution" value="2.55 A"/>
    <property type="chains" value="A=1-342"/>
</dbReference>
<dbReference type="PDB" id="5WNK">
    <property type="method" value="X-ray"/>
    <property type="resolution" value="3.11 A"/>
    <property type="chains" value="A=1-342"/>
</dbReference>
<dbReference type="PDB" id="5WNL">
    <property type="method" value="X-ray"/>
    <property type="resolution" value="2.50 A"/>
    <property type="chains" value="A=1-342"/>
</dbReference>
<dbReference type="PDB" id="5WNM">
    <property type="method" value="X-ray"/>
    <property type="resolution" value="2.60 A"/>
    <property type="chains" value="A=1-342"/>
</dbReference>
<dbReference type="PDBsum" id="5WNI"/>
<dbReference type="PDBsum" id="5WNJ"/>
<dbReference type="PDBsum" id="5WNK"/>
<dbReference type="PDBsum" id="5WNL"/>
<dbReference type="PDBsum" id="5WNM"/>
<dbReference type="SMR" id="Q9ERK0"/>
<dbReference type="FunCoup" id="Q9ERK0">
    <property type="interactions" value="481"/>
</dbReference>
<dbReference type="IntAct" id="Q9ERK0">
    <property type="interactions" value="1"/>
</dbReference>
<dbReference type="STRING" id="10090.ENSMUSP00000019386"/>
<dbReference type="iPTMnet" id="Q9ERK0"/>
<dbReference type="PhosphoSitePlus" id="Q9ERK0"/>
<dbReference type="PaxDb" id="10090-ENSMUSP00000019386"/>
<dbReference type="ProteomicsDB" id="253312"/>
<dbReference type="Antibodypedia" id="9243">
    <property type="antibodies" value="308 antibodies from 27 providers"/>
</dbReference>
<dbReference type="DNASU" id="72388"/>
<dbReference type="Ensembl" id="ENSMUST00000019386.10">
    <property type="protein sequence ID" value="ENSMUSP00000019386.9"/>
    <property type="gene ID" value="ENSMUSG00000005251.16"/>
</dbReference>
<dbReference type="GeneID" id="72388"/>
<dbReference type="KEGG" id="mmu:72388"/>
<dbReference type="UCSC" id="uc008adn.1">
    <property type="organism name" value="mouse"/>
</dbReference>
<dbReference type="AGR" id="MGI:1919638"/>
<dbReference type="CTD" id="54101"/>
<dbReference type="MGI" id="MGI:1919638">
    <property type="gene designation" value="Ripk4"/>
</dbReference>
<dbReference type="VEuPathDB" id="HostDB:ENSMUSG00000005251"/>
<dbReference type="eggNOG" id="KOG0192">
    <property type="taxonomic scope" value="Eukaryota"/>
</dbReference>
<dbReference type="eggNOG" id="KOG0504">
    <property type="taxonomic scope" value="Eukaryota"/>
</dbReference>
<dbReference type="GeneTree" id="ENSGT00940000159908"/>
<dbReference type="HOGENOM" id="CLU_015188_0_0_1"/>
<dbReference type="InParanoid" id="Q9ERK0"/>
<dbReference type="OMA" id="HSKENTC"/>
<dbReference type="OrthoDB" id="195446at2759"/>
<dbReference type="PhylomeDB" id="Q9ERK0"/>
<dbReference type="TreeFam" id="TF106506"/>
<dbReference type="BioGRID-ORCS" id="72388">
    <property type="hits" value="2 hits in 79 CRISPR screens"/>
</dbReference>
<dbReference type="CD-CODE" id="764D0258">
    <property type="entry name" value="Neuronal RNP granule"/>
</dbReference>
<dbReference type="ChiTaRS" id="Ripk4">
    <property type="organism name" value="mouse"/>
</dbReference>
<dbReference type="PRO" id="PR:Q9ERK0"/>
<dbReference type="Proteomes" id="UP000000589">
    <property type="component" value="Chromosome 16"/>
</dbReference>
<dbReference type="RNAct" id="Q9ERK0">
    <property type="molecule type" value="protein"/>
</dbReference>
<dbReference type="Bgee" id="ENSMUSG00000005251">
    <property type="expression patterns" value="Expressed in urinary bladder urothelium and 199 other cell types or tissues"/>
</dbReference>
<dbReference type="GO" id="GO:0005737">
    <property type="term" value="C:cytoplasm"/>
    <property type="evidence" value="ECO:0000314"/>
    <property type="project" value="UniProtKB"/>
</dbReference>
<dbReference type="GO" id="GO:0005829">
    <property type="term" value="C:cytosol"/>
    <property type="evidence" value="ECO:0007669"/>
    <property type="project" value="Ensembl"/>
</dbReference>
<dbReference type="GO" id="GO:0043231">
    <property type="term" value="C:intracellular membrane-bounded organelle"/>
    <property type="evidence" value="ECO:0007669"/>
    <property type="project" value="Ensembl"/>
</dbReference>
<dbReference type="GO" id="GO:0005886">
    <property type="term" value="C:plasma membrane"/>
    <property type="evidence" value="ECO:0007669"/>
    <property type="project" value="Ensembl"/>
</dbReference>
<dbReference type="GO" id="GO:0005524">
    <property type="term" value="F:ATP binding"/>
    <property type="evidence" value="ECO:0007669"/>
    <property type="project" value="UniProtKB-KW"/>
</dbReference>
<dbReference type="GO" id="GO:0106310">
    <property type="term" value="F:protein serine kinase activity"/>
    <property type="evidence" value="ECO:0000314"/>
    <property type="project" value="UniProtKB"/>
</dbReference>
<dbReference type="GO" id="GO:0004674">
    <property type="term" value="F:protein serine/threonine kinase activity"/>
    <property type="evidence" value="ECO:0007669"/>
    <property type="project" value="UniProtKB-KW"/>
</dbReference>
<dbReference type="GO" id="GO:0002009">
    <property type="term" value="P:morphogenesis of an epithelium"/>
    <property type="evidence" value="ECO:0007669"/>
    <property type="project" value="Ensembl"/>
</dbReference>
<dbReference type="GO" id="GO:0043588">
    <property type="term" value="P:skin development"/>
    <property type="evidence" value="ECO:0000315"/>
    <property type="project" value="UniProtKB"/>
</dbReference>
<dbReference type="CDD" id="cd14025">
    <property type="entry name" value="STKc_RIP4_like"/>
    <property type="match status" value="1"/>
</dbReference>
<dbReference type="FunFam" id="1.25.40.20:FF:000709">
    <property type="entry name" value="Calcium transporter 2"/>
    <property type="match status" value="1"/>
</dbReference>
<dbReference type="FunFam" id="1.10.510.10:FF:000288">
    <property type="entry name" value="Receptor-interacting serine/threonine-protein kinase 2"/>
    <property type="match status" value="1"/>
</dbReference>
<dbReference type="FunFam" id="1.25.40.20:FF:000260">
    <property type="entry name" value="Receptor-interacting serine/threonine-protein kinase 4"/>
    <property type="match status" value="1"/>
</dbReference>
<dbReference type="Gene3D" id="1.25.40.20">
    <property type="entry name" value="Ankyrin repeat-containing domain"/>
    <property type="match status" value="3"/>
</dbReference>
<dbReference type="Gene3D" id="1.10.510.10">
    <property type="entry name" value="Transferase(Phosphotransferase) domain 1"/>
    <property type="match status" value="1"/>
</dbReference>
<dbReference type="InterPro" id="IPR002110">
    <property type="entry name" value="Ankyrin_rpt"/>
</dbReference>
<dbReference type="InterPro" id="IPR036770">
    <property type="entry name" value="Ankyrin_rpt-contain_sf"/>
</dbReference>
<dbReference type="InterPro" id="IPR011009">
    <property type="entry name" value="Kinase-like_dom_sf"/>
</dbReference>
<dbReference type="InterPro" id="IPR000719">
    <property type="entry name" value="Prot_kinase_dom"/>
</dbReference>
<dbReference type="InterPro" id="IPR017441">
    <property type="entry name" value="Protein_kinase_ATP_BS"/>
</dbReference>
<dbReference type="InterPro" id="IPR008271">
    <property type="entry name" value="Ser/Thr_kinase_AS"/>
</dbReference>
<dbReference type="PANTHER" id="PTHR24198">
    <property type="entry name" value="ANKYRIN REPEAT AND PROTEIN KINASE DOMAIN-CONTAINING PROTEIN"/>
    <property type="match status" value="1"/>
</dbReference>
<dbReference type="PANTHER" id="PTHR24198:SF65">
    <property type="entry name" value="RECEPTOR-INTERACTING SERINE_THREONINE-PROTEIN KINASE 4"/>
    <property type="match status" value="1"/>
</dbReference>
<dbReference type="Pfam" id="PF12796">
    <property type="entry name" value="Ank_2"/>
    <property type="match status" value="3"/>
</dbReference>
<dbReference type="Pfam" id="PF13637">
    <property type="entry name" value="Ank_4"/>
    <property type="match status" value="2"/>
</dbReference>
<dbReference type="Pfam" id="PF00069">
    <property type="entry name" value="Pkinase"/>
    <property type="match status" value="1"/>
</dbReference>
<dbReference type="PRINTS" id="PR01415">
    <property type="entry name" value="ANKYRIN"/>
</dbReference>
<dbReference type="SMART" id="SM00248">
    <property type="entry name" value="ANK"/>
    <property type="match status" value="10"/>
</dbReference>
<dbReference type="SMART" id="SM00220">
    <property type="entry name" value="S_TKc"/>
    <property type="match status" value="1"/>
</dbReference>
<dbReference type="SUPFAM" id="SSF48403">
    <property type="entry name" value="Ankyrin repeat"/>
    <property type="match status" value="1"/>
</dbReference>
<dbReference type="SUPFAM" id="SSF56112">
    <property type="entry name" value="Protein kinase-like (PK-like)"/>
    <property type="match status" value="1"/>
</dbReference>
<dbReference type="PROSITE" id="PS50297">
    <property type="entry name" value="ANK_REP_REGION"/>
    <property type="match status" value="1"/>
</dbReference>
<dbReference type="PROSITE" id="PS50088">
    <property type="entry name" value="ANK_REPEAT"/>
    <property type="match status" value="9"/>
</dbReference>
<dbReference type="PROSITE" id="PS00107">
    <property type="entry name" value="PROTEIN_KINASE_ATP"/>
    <property type="match status" value="1"/>
</dbReference>
<dbReference type="PROSITE" id="PS50011">
    <property type="entry name" value="PROTEIN_KINASE_DOM"/>
    <property type="match status" value="1"/>
</dbReference>
<dbReference type="PROSITE" id="PS00108">
    <property type="entry name" value="PROTEIN_KINASE_ST"/>
    <property type="match status" value="1"/>
</dbReference>
<evidence type="ECO:0000250" key="1"/>
<evidence type="ECO:0000250" key="2">
    <source>
        <dbReference type="UniProtKB" id="P57078"/>
    </source>
</evidence>
<evidence type="ECO:0000255" key="3">
    <source>
        <dbReference type="PROSITE-ProRule" id="PRU00159"/>
    </source>
</evidence>
<evidence type="ECO:0000255" key="4">
    <source>
        <dbReference type="PROSITE-ProRule" id="PRU10027"/>
    </source>
</evidence>
<evidence type="ECO:0000256" key="5">
    <source>
        <dbReference type="SAM" id="MobiDB-lite"/>
    </source>
</evidence>
<evidence type="ECO:0000269" key="6">
    <source>
    </source>
</evidence>
<evidence type="ECO:0000269" key="7">
    <source>
    </source>
</evidence>
<evidence type="ECO:0000269" key="8">
    <source>
    </source>
</evidence>
<evidence type="ECO:0000269" key="9">
    <source>
    </source>
</evidence>
<evidence type="ECO:0000269" key="10">
    <source>
    </source>
</evidence>
<evidence type="ECO:0000305" key="11"/>
<evidence type="ECO:0007829" key="12">
    <source>
        <dbReference type="PDB" id="5WNI"/>
    </source>
</evidence>
<evidence type="ECO:0007829" key="13">
    <source>
        <dbReference type="PDB" id="5WNJ"/>
    </source>
</evidence>
<evidence type="ECO:0007829" key="14">
    <source>
        <dbReference type="PDB" id="5WNL"/>
    </source>
</evidence>
<evidence type="ECO:0007829" key="15">
    <source>
        <dbReference type="PDB" id="5WNM"/>
    </source>
</evidence>
<protein>
    <recommendedName>
        <fullName>Receptor-interacting serine/threonine-protein kinase 4</fullName>
        <ecNumber evidence="10">2.7.11.1</ecNumber>
    </recommendedName>
    <alternativeName>
        <fullName>Ankyrin repeat domain-containing protein 3</fullName>
    </alternativeName>
    <alternativeName>
        <fullName>PKC-associated protein kinase</fullName>
    </alternativeName>
    <alternativeName>
        <fullName>PKC-regulated protein kinase</fullName>
    </alternativeName>
</protein>
<name>RIPK4_MOUSE</name>
<accession>Q9ERK0</accession>
<accession>Q3UM04</accession>
<feature type="chain" id="PRO_0000273726" description="Receptor-interacting serine/threonine-protein kinase 4">
    <location>
        <begin position="1"/>
        <end position="786"/>
    </location>
</feature>
<feature type="domain" description="Protein kinase" evidence="3">
    <location>
        <begin position="22"/>
        <end position="286"/>
    </location>
</feature>
<feature type="repeat" description="ANK 1">
    <location>
        <begin position="439"/>
        <end position="468"/>
    </location>
</feature>
<feature type="repeat" description="ANK 2">
    <location>
        <begin position="472"/>
        <end position="501"/>
    </location>
</feature>
<feature type="repeat" description="ANK 3">
    <location>
        <begin position="505"/>
        <end position="534"/>
    </location>
</feature>
<feature type="repeat" description="ANK 4">
    <location>
        <begin position="538"/>
        <end position="567"/>
    </location>
</feature>
<feature type="repeat" description="ANK 5">
    <location>
        <begin position="571"/>
        <end position="601"/>
    </location>
</feature>
<feature type="repeat" description="ANK 6">
    <location>
        <begin position="605"/>
        <end position="634"/>
    </location>
</feature>
<feature type="repeat" description="ANK 7">
    <location>
        <begin position="638"/>
        <end position="667"/>
    </location>
</feature>
<feature type="repeat" description="ANK 8">
    <location>
        <begin position="671"/>
        <end position="700"/>
    </location>
</feature>
<feature type="repeat" description="ANK 9">
    <location>
        <begin position="704"/>
        <end position="734"/>
    </location>
</feature>
<feature type="repeat" description="ANK 10">
    <location>
        <begin position="736"/>
        <end position="765"/>
    </location>
</feature>
<feature type="region of interest" description="Disordered" evidence="5">
    <location>
        <begin position="293"/>
        <end position="328"/>
    </location>
</feature>
<feature type="region of interest" description="Disordered" evidence="5">
    <location>
        <begin position="347"/>
        <end position="378"/>
    </location>
</feature>
<feature type="compositionally biased region" description="Basic and acidic residues" evidence="5">
    <location>
        <begin position="295"/>
        <end position="319"/>
    </location>
</feature>
<feature type="compositionally biased region" description="Low complexity" evidence="5">
    <location>
        <begin position="357"/>
        <end position="378"/>
    </location>
</feature>
<feature type="active site" description="Proton acceptor" evidence="3 4">
    <location>
        <position position="143"/>
    </location>
</feature>
<feature type="binding site" evidence="3">
    <location>
        <begin position="28"/>
        <end position="36"/>
    </location>
    <ligand>
        <name>ATP</name>
        <dbReference type="ChEBI" id="CHEBI:30616"/>
    </ligand>
</feature>
<feature type="binding site" evidence="3">
    <location>
        <position position="51"/>
    </location>
    <ligand>
        <name>ATP</name>
        <dbReference type="ChEBI" id="CHEBI:30616"/>
    </ligand>
</feature>
<feature type="site" description="Cleavage" evidence="7">
    <location>
        <begin position="342"/>
        <end position="343"/>
    </location>
</feature>
<feature type="site" description="Cleavage" evidence="7">
    <location>
        <begin position="380"/>
        <end position="381"/>
    </location>
</feature>
<feature type="cross-link" description="Glycyl lysine isopeptide (Lys-Gly) (interchain with G-Cter in ubiquitin)" evidence="2">
    <location>
        <position position="51"/>
    </location>
</feature>
<feature type="cross-link" description="Glycyl lysine isopeptide (Lys-Gly) (interchain with G-Cter in ubiquitin)" evidence="2">
    <location>
        <position position="145"/>
    </location>
</feature>
<feature type="sequence conflict" description="In Ref. 2; BAE26294." evidence="11" ref="2">
    <original>S</original>
    <variation>T</variation>
    <location>
        <position position="718"/>
    </location>
</feature>
<feature type="helix" evidence="12">
    <location>
        <begin position="10"/>
        <end position="13"/>
    </location>
</feature>
<feature type="strand" evidence="14">
    <location>
        <begin position="15"/>
        <end position="17"/>
    </location>
</feature>
<feature type="helix" evidence="14">
    <location>
        <begin position="19"/>
        <end position="21"/>
    </location>
</feature>
<feature type="strand" evidence="14">
    <location>
        <begin position="22"/>
        <end position="29"/>
    </location>
</feature>
<feature type="strand" evidence="14">
    <location>
        <begin position="31"/>
        <end position="33"/>
    </location>
</feature>
<feature type="strand" evidence="14">
    <location>
        <begin position="36"/>
        <end position="41"/>
    </location>
</feature>
<feature type="turn" evidence="14">
    <location>
        <begin position="42"/>
        <end position="45"/>
    </location>
</feature>
<feature type="strand" evidence="14">
    <location>
        <begin position="46"/>
        <end position="52"/>
    </location>
</feature>
<feature type="strand" evidence="13">
    <location>
        <begin position="54"/>
        <end position="57"/>
    </location>
</feature>
<feature type="helix" evidence="14">
    <location>
        <begin position="60"/>
        <end position="75"/>
    </location>
</feature>
<feature type="strand" evidence="14">
    <location>
        <begin position="84"/>
        <end position="88"/>
    </location>
</feature>
<feature type="turn" evidence="14">
    <location>
        <begin position="89"/>
        <end position="92"/>
    </location>
</feature>
<feature type="strand" evidence="14">
    <location>
        <begin position="93"/>
        <end position="97"/>
    </location>
</feature>
<feature type="strand" evidence="15">
    <location>
        <begin position="100"/>
        <end position="103"/>
    </location>
</feature>
<feature type="helix" evidence="14">
    <location>
        <begin position="104"/>
        <end position="110"/>
    </location>
</feature>
<feature type="helix" evidence="14">
    <location>
        <begin position="115"/>
        <end position="134"/>
    </location>
</feature>
<feature type="strand" evidence="14">
    <location>
        <begin position="135"/>
        <end position="137"/>
    </location>
</feature>
<feature type="turn" evidence="14">
    <location>
        <begin position="146"/>
        <end position="148"/>
    </location>
</feature>
<feature type="strand" evidence="14">
    <location>
        <begin position="149"/>
        <end position="151"/>
    </location>
</feature>
<feature type="strand" evidence="14">
    <location>
        <begin position="157"/>
        <end position="159"/>
    </location>
</feature>
<feature type="turn" evidence="14">
    <location>
        <begin position="184"/>
        <end position="187"/>
    </location>
</feature>
<feature type="helix" evidence="14">
    <location>
        <begin position="190"/>
        <end position="194"/>
    </location>
</feature>
<feature type="strand" evidence="14">
    <location>
        <begin position="195"/>
        <end position="197"/>
    </location>
</feature>
<feature type="helix" evidence="14">
    <location>
        <begin position="202"/>
        <end position="218"/>
    </location>
</feature>
<feature type="helix" evidence="14">
    <location>
        <begin position="229"/>
        <end position="237"/>
    </location>
</feature>
<feature type="strand" evidence="14">
    <location>
        <begin position="249"/>
        <end position="251"/>
    </location>
</feature>
<feature type="helix" evidence="14">
    <location>
        <begin position="252"/>
        <end position="265"/>
    </location>
</feature>
<feature type="helix" evidence="14">
    <location>
        <begin position="270"/>
        <end position="272"/>
    </location>
</feature>
<feature type="helix" evidence="14">
    <location>
        <begin position="276"/>
        <end position="286"/>
    </location>
</feature>
<keyword id="KW-0002">3D-structure</keyword>
<keyword id="KW-0040">ANK repeat</keyword>
<keyword id="KW-0067">ATP-binding</keyword>
<keyword id="KW-0963">Cytoplasm</keyword>
<keyword id="KW-1017">Isopeptide bond</keyword>
<keyword id="KW-0418">Kinase</keyword>
<keyword id="KW-0472">Membrane</keyword>
<keyword id="KW-0547">Nucleotide-binding</keyword>
<keyword id="KW-0597">Phosphoprotein</keyword>
<keyword id="KW-0675">Receptor</keyword>
<keyword id="KW-1185">Reference proteome</keyword>
<keyword id="KW-0677">Repeat</keyword>
<keyword id="KW-0723">Serine/threonine-protein kinase</keyword>
<keyword id="KW-0808">Transferase</keyword>
<keyword id="KW-0832">Ubl conjugation</keyword>
<organism>
    <name type="scientific">Mus musculus</name>
    <name type="common">Mouse</name>
    <dbReference type="NCBI Taxonomy" id="10090"/>
    <lineage>
        <taxon>Eukaryota</taxon>
        <taxon>Metazoa</taxon>
        <taxon>Chordata</taxon>
        <taxon>Craniata</taxon>
        <taxon>Vertebrata</taxon>
        <taxon>Euteleostomi</taxon>
        <taxon>Mammalia</taxon>
        <taxon>Eutheria</taxon>
        <taxon>Euarchontoglires</taxon>
        <taxon>Glires</taxon>
        <taxon>Rodentia</taxon>
        <taxon>Myomorpha</taxon>
        <taxon>Muroidea</taxon>
        <taxon>Muridae</taxon>
        <taxon>Murinae</taxon>
        <taxon>Mus</taxon>
        <taxon>Mus</taxon>
    </lineage>
</organism>
<comment type="function">
    <text evidence="7 9 10">Serine/threonine protein kinase (PubMed:28507225). Required for embryonic skin development and correct skin homeostasis in adults, via phosphorylation of PKP1 and subsequent promotion of keratinocyte differentiation and cell adhesion (PubMed:28507225). It is a direct transcriptional target of TP63 (PubMed:22197488). Plays a role in NF-kappa-B activation (PubMed:12446564).</text>
</comment>
<comment type="catalytic activity">
    <reaction evidence="10">
        <text>L-seryl-[protein] + ATP = O-phospho-L-seryl-[protein] + ADP + H(+)</text>
        <dbReference type="Rhea" id="RHEA:17989"/>
        <dbReference type="Rhea" id="RHEA-COMP:9863"/>
        <dbReference type="Rhea" id="RHEA-COMP:11604"/>
        <dbReference type="ChEBI" id="CHEBI:15378"/>
        <dbReference type="ChEBI" id="CHEBI:29999"/>
        <dbReference type="ChEBI" id="CHEBI:30616"/>
        <dbReference type="ChEBI" id="CHEBI:83421"/>
        <dbReference type="ChEBI" id="CHEBI:456216"/>
        <dbReference type="EC" id="2.7.11.1"/>
    </reaction>
</comment>
<comment type="catalytic activity">
    <reaction>
        <text>L-threonyl-[protein] + ATP = O-phospho-L-threonyl-[protein] + ADP + H(+)</text>
        <dbReference type="Rhea" id="RHEA:46608"/>
        <dbReference type="Rhea" id="RHEA-COMP:11060"/>
        <dbReference type="Rhea" id="RHEA-COMP:11605"/>
        <dbReference type="ChEBI" id="CHEBI:15378"/>
        <dbReference type="ChEBI" id="CHEBI:30013"/>
        <dbReference type="ChEBI" id="CHEBI:30616"/>
        <dbReference type="ChEBI" id="CHEBI:61977"/>
        <dbReference type="ChEBI" id="CHEBI:456216"/>
        <dbReference type="EC" id="2.7.11.1"/>
    </reaction>
</comment>
<comment type="subunit">
    <text evidence="6 7">Interacts with PRKCB. Interacts with TRAF1, TRAF2, TRAF3 and TRAF5. Interacts with BIRC2/c-IAP1, BIRC3/c-IAP2 and XIAP/BIRC4.</text>
</comment>
<comment type="interaction">
    <interactant intactId="EBI-6116422">
        <id>Q9ERK0</id>
    </interactant>
    <interactant intactId="EBI-307556">
        <id>Q6Q0C0</id>
        <label>TRAF7</label>
    </interactant>
    <organismsDiffer>true</organismsDiffer>
    <experiments>2</experiments>
</comment>
<comment type="subcellular location">
    <subcellularLocation>
        <location>Cytoplasm</location>
    </subcellularLocation>
    <subcellularLocation>
        <location>Membrane</location>
        <topology>Peripheral membrane protein</topology>
    </subcellularLocation>
    <text>At steady state, a minor portion of this protein is membrane-associated. The major portion is cytoplasmic.</text>
</comment>
<comment type="tissue specificity">
    <text evidence="6 10">Expressed in the epidermis of the skin (at protein level) (PubMed:28507225). Ubiquitously expressed, with an abundant expression in the thymus, bone marrow, pro-B, pre-B and immature B cells and a weak expression in the spleen (PubMed:11278382).</text>
</comment>
<comment type="developmental stage">
    <text evidence="6">Expressed at 10.5 dpc at diverse locations including the embryonic forebrain, otic vesicle, branchial arches, primitive gut, and genitourinary system. Transient expression in the ventral neural tube at 12.5 dpc. By 14.5 dpc, strong expression throughout the gastrointestinal tract was observed in the luminal tissues of the esophagus, stomach, duodenum, and intestines, as well as transient expression in the skin. Not expressed in kidney.</text>
</comment>
<comment type="PTM">
    <text evidence="6 8">May be phosphorylated by MAP3K2 and MAP3K3.</text>
</comment>
<comment type="PTM">
    <text evidence="7">Proteolytically cleaved by during Fas-induced apoptosis. Cleavage at Asp-342 and Asp-380.</text>
</comment>
<comment type="PTM">
    <text evidence="1">Polyubiquitinated with 'Lys-48' and 'Lys-63'-linked chains by BIRC2/c-IAP1 and BIRC3/c-IAP2, leading to activation of NF-kappa-B.</text>
</comment>
<comment type="disruption phenotype">
    <text evidence="10">Conditional skin knockouts in embryos show significantly thicker skin and aberrant skin stratification with Krt14 expression extending into the suprabasal layers throughout the epidermis (PubMed:28507225). Adults show a similarly thickened epidermis, with expansion of the spinous layer and basal cells independent of proliferation rate (PubMed:28507225). 60% of adults develop spontaneous facial tumors when aged (PubMed:28507225).</text>
</comment>
<comment type="miscellaneous">
    <text evidence="10">May act as a tumor suppressor in the epidermis when exposed to dermal carcinogenic agents.</text>
</comment>
<comment type="similarity">
    <text evidence="11">Belongs to the protein kinase superfamily. TKL Ser/Thr protein kinase family.</text>
</comment>
<sequence>MEGEGRGRWALGLLRTFDAGEFAGWEKVGSGGFGQVYKVRHVHWKTWLAIKCSPSLHVDDRERMELLEEAKKMEMAKFRYILPVYGICQEPVGLVMEYMETGSLEKLLASEPLPWDLRFRIVHETAVGMNFLHCMSPPLLHLDLKPANILLDAHYHVKISDFGLAKCNGMSHSHDLSMDGLFGTIAYLPPERIREKSRLFDTKHDVYSFAIVIWGVLTQKKPFADEKNILHIMMKVVKGHRPELPPICRPRPRACASLIGLMQRCWHADPQVRPTFQEITSETEDLCEKPDEEVKDLAHEPGEKSSLESKSEARPESSRLKRASAPPFDNDCSLSELLSQLDSGISQTLEGPEELSRSSSECKLPSSSSGKRLSGVSSVDSAFSSRGSLSLSFEREASTGDLGPTDIQKKKLVDAIISGDTSRLMKILQPQDVDLVLDSSASLLHLAVEAGQEECVKWLLLNNANPNLTNRKGSTPLHMAVERKGRGIVELLLARKTSVNAKDEDQWTALHFAAQNGDEASTRLLLEKNASVNEVDFEGRTPMHVACQHGQENIVRTLLRRGVDVGLQGKDAWLPLHYAAWQGHLPIVKLLAKQPGVSVNAQTLDGRTPLHLAAQRGHYRVARILIDLCSDVNICSLQAQTPLHVAAETGHTSTARLLLHRGAGKEALTSEGYTALHLAAQNGHLATVKLLIEEKADVMARGPLNQTALHLAAARGHSEVVEELVSADLIDLSDEQGLSALHLAAQGRHSQTVETLLKHGAHINLQSLKFQGGQSSAATLLRRSKT</sequence>